<reference key="1">
    <citation type="journal article" date="1998" name="Proc. Natl. Acad. Sci. U.S.A.">
        <title>Identification of the lactococcal exonuclease/recombinase and its modulation by the putative Chi sequence.</title>
        <authorList>
            <person name="El-Karoui M."/>
            <person name="Ehrlich S.D."/>
            <person name="Gruss A."/>
        </authorList>
    </citation>
    <scope>NUCLEOTIDE SEQUENCE [GENOMIC DNA]</scope>
    <scope>FUNCTION</scope>
    <scope>FUNCTION IN E.COLI</scope>
    <scope>OPERON STRUCTURE</scope>
    <scope>DISRUPTION PHENOTYPE</scope>
</reference>
<reference key="2">
    <citation type="journal article" date="2007" name="J. Bacteriol.">
        <title>The complete genome sequence of the lactic acid bacterial paradigm Lactococcus lactis subsp. cremoris MG1363.</title>
        <authorList>
            <person name="Wegmann U."/>
            <person name="O'Connell-Motherway M."/>
            <person name="Zomer A."/>
            <person name="Buist G."/>
            <person name="Shearman C."/>
            <person name="Canchaya C."/>
            <person name="Ventura M."/>
            <person name="Goesmann A."/>
            <person name="Gasson M.J."/>
            <person name="Kuipers O.P."/>
            <person name="van Sinderen D."/>
            <person name="Kok J."/>
        </authorList>
    </citation>
    <scope>NUCLEOTIDE SEQUENCE [LARGE SCALE GENOMIC DNA]</scope>
    <source>
        <strain>MG1363</strain>
    </source>
</reference>
<reference key="3">
    <citation type="journal article" date="2000" name="Genes Cells">
        <title>Orientation specificity of the Lactococcus lactis Chi site.</title>
        <authorList>
            <person name="El Karoui M."/>
            <person name="Schaeffer M."/>
            <person name="Biaudet V."/>
            <person name="Bolotin A."/>
            <person name="Sorokin A."/>
            <person name="Gruss A."/>
        </authorList>
    </citation>
    <scope>RECOGNITION OF CHI SEQUENCES</scope>
</reference>
<reference key="4">
    <citation type="journal article" date="2001" name="J. Bacteriol.">
        <title>In vivo evidence for two active nuclease motifs in the double-strand break repair enzyme RexAB of Lactococcus lactis.</title>
        <authorList>
            <person name="Quiberoni A."/>
            <person name="Biswas I."/>
            <person name="El Karoui M."/>
            <person name="Rezaiki L."/>
            <person name="Tailliez P."/>
            <person name="Gruss A."/>
        </authorList>
    </citation>
    <scope>FUNCTION</scope>
    <scope>EXONUCLEASE ACTIVITY</scope>
    <scope>MUTAGENESIS OF 1144-ASP--LYS-1146</scope>
</reference>
<evidence type="ECO:0000255" key="1">
    <source>
        <dbReference type="HAMAP-Rule" id="MF_01451"/>
    </source>
</evidence>
<evidence type="ECO:0000269" key="2">
    <source>
    </source>
</evidence>
<evidence type="ECO:0000269" key="3">
    <source>
    </source>
</evidence>
<evidence type="ECO:0000303" key="4">
    <source>
    </source>
</evidence>
<evidence type="ECO:0000303" key="5">
    <source>
    </source>
</evidence>
<evidence type="ECO:0000305" key="6"/>
<evidence type="ECO:0000305" key="7">
    <source>
    </source>
</evidence>
<organism>
    <name type="scientific">Lactococcus lactis subsp. cremoris (strain MG1363)</name>
    <dbReference type="NCBI Taxonomy" id="416870"/>
    <lineage>
        <taxon>Bacteria</taxon>
        <taxon>Bacillati</taxon>
        <taxon>Bacillota</taxon>
        <taxon>Bacilli</taxon>
        <taxon>Lactobacillales</taxon>
        <taxon>Streptococcaceae</taxon>
        <taxon>Lactococcus</taxon>
        <taxon>Lactococcus cremoris subsp. cremoris</taxon>
    </lineage>
</organism>
<dbReference type="EC" id="3.1.-.-" evidence="1 2"/>
<dbReference type="EC" id="5.6.2.4" evidence="1"/>
<dbReference type="EMBL" id="U76424">
    <property type="protein sequence ID" value="AAC12966.1"/>
    <property type="molecule type" value="Genomic_DNA"/>
</dbReference>
<dbReference type="EMBL" id="AM406671">
    <property type="protein sequence ID" value="CAL96613.1"/>
    <property type="molecule type" value="Genomic_DNA"/>
</dbReference>
<dbReference type="PIR" id="T30308">
    <property type="entry name" value="T30308"/>
</dbReference>
<dbReference type="RefSeq" id="WP_011834123.1">
    <property type="nucleotide sequence ID" value="NC_009004.1"/>
</dbReference>
<dbReference type="SMR" id="A2RH77"/>
<dbReference type="STRING" id="416870.llmg_0004"/>
<dbReference type="KEGG" id="llm:llmg_0004"/>
<dbReference type="eggNOG" id="COG1074">
    <property type="taxonomic scope" value="Bacteria"/>
</dbReference>
<dbReference type="HOGENOM" id="CLU_001114_3_1_9"/>
<dbReference type="OrthoDB" id="9810135at2"/>
<dbReference type="PhylomeDB" id="A2RH77"/>
<dbReference type="Proteomes" id="UP000000364">
    <property type="component" value="Chromosome"/>
</dbReference>
<dbReference type="GO" id="GO:0005829">
    <property type="term" value="C:cytosol"/>
    <property type="evidence" value="ECO:0007669"/>
    <property type="project" value="TreeGrafter"/>
</dbReference>
<dbReference type="GO" id="GO:0033202">
    <property type="term" value="C:DNA helicase complex"/>
    <property type="evidence" value="ECO:0007669"/>
    <property type="project" value="TreeGrafter"/>
</dbReference>
<dbReference type="GO" id="GO:0043138">
    <property type="term" value="F:3'-5' DNA helicase activity"/>
    <property type="evidence" value="ECO:0007669"/>
    <property type="project" value="UniProtKB-UniRule"/>
</dbReference>
<dbReference type="GO" id="GO:0008408">
    <property type="term" value="F:3'-5' exonuclease activity"/>
    <property type="evidence" value="ECO:0007669"/>
    <property type="project" value="UniProtKB-UniRule"/>
</dbReference>
<dbReference type="GO" id="GO:0005524">
    <property type="term" value="F:ATP binding"/>
    <property type="evidence" value="ECO:0007669"/>
    <property type="project" value="UniProtKB-UniRule"/>
</dbReference>
<dbReference type="GO" id="GO:0016887">
    <property type="term" value="F:ATP hydrolysis activity"/>
    <property type="evidence" value="ECO:0007669"/>
    <property type="project" value="RHEA"/>
</dbReference>
<dbReference type="GO" id="GO:0003690">
    <property type="term" value="F:double-stranded DNA binding"/>
    <property type="evidence" value="ECO:0007669"/>
    <property type="project" value="UniProtKB-UniRule"/>
</dbReference>
<dbReference type="GO" id="GO:0000724">
    <property type="term" value="P:double-strand break repair via homologous recombination"/>
    <property type="evidence" value="ECO:0007669"/>
    <property type="project" value="UniProtKB-UniRule"/>
</dbReference>
<dbReference type="CDD" id="cd17932">
    <property type="entry name" value="DEXQc_UvrD"/>
    <property type="match status" value="1"/>
</dbReference>
<dbReference type="Gene3D" id="1.10.10.160">
    <property type="match status" value="1"/>
</dbReference>
<dbReference type="Gene3D" id="3.90.320.10">
    <property type="match status" value="1"/>
</dbReference>
<dbReference type="Gene3D" id="3.40.50.300">
    <property type="entry name" value="P-loop containing nucleotide triphosphate hydrolases"/>
    <property type="match status" value="4"/>
</dbReference>
<dbReference type="Gene3D" id="1.10.486.10">
    <property type="entry name" value="PCRA, domain 4"/>
    <property type="match status" value="1"/>
</dbReference>
<dbReference type="HAMAP" id="MF_01451">
    <property type="entry name" value="AddA"/>
    <property type="match status" value="1"/>
</dbReference>
<dbReference type="InterPro" id="IPR014152">
    <property type="entry name" value="AddA"/>
</dbReference>
<dbReference type="InterPro" id="IPR013986">
    <property type="entry name" value="DExx_box_DNA_helicase_dom_sf"/>
</dbReference>
<dbReference type="InterPro" id="IPR014017">
    <property type="entry name" value="DNA_helicase_UvrD-like_C"/>
</dbReference>
<dbReference type="InterPro" id="IPR000212">
    <property type="entry name" value="DNA_helicase_UvrD/REP"/>
</dbReference>
<dbReference type="InterPro" id="IPR027417">
    <property type="entry name" value="P-loop_NTPase"/>
</dbReference>
<dbReference type="InterPro" id="IPR011604">
    <property type="entry name" value="PDDEXK-like_dom_sf"/>
</dbReference>
<dbReference type="InterPro" id="IPR011335">
    <property type="entry name" value="Restrct_endonuc-II-like"/>
</dbReference>
<dbReference type="InterPro" id="IPR014016">
    <property type="entry name" value="UvrD-like_ATP-bd"/>
</dbReference>
<dbReference type="NCBIfam" id="TIGR02785">
    <property type="entry name" value="addA_Gpos"/>
    <property type="match status" value="1"/>
</dbReference>
<dbReference type="PANTHER" id="PTHR11070:SF48">
    <property type="entry name" value="ATP-DEPENDENT HELICASE_NUCLEASE SUBUNIT A"/>
    <property type="match status" value="1"/>
</dbReference>
<dbReference type="PANTHER" id="PTHR11070">
    <property type="entry name" value="UVRD / RECB / PCRA DNA HELICASE FAMILY MEMBER"/>
    <property type="match status" value="1"/>
</dbReference>
<dbReference type="Pfam" id="PF00580">
    <property type="entry name" value="UvrD-helicase"/>
    <property type="match status" value="1"/>
</dbReference>
<dbReference type="Pfam" id="PF13361">
    <property type="entry name" value="UvrD_C"/>
    <property type="match status" value="1"/>
</dbReference>
<dbReference type="SUPFAM" id="SSF52540">
    <property type="entry name" value="P-loop containing nucleoside triphosphate hydrolases"/>
    <property type="match status" value="1"/>
</dbReference>
<dbReference type="SUPFAM" id="SSF52980">
    <property type="entry name" value="Restriction endonuclease-like"/>
    <property type="match status" value="1"/>
</dbReference>
<dbReference type="PROSITE" id="PS51198">
    <property type="entry name" value="UVRD_HELICASE_ATP_BIND"/>
    <property type="match status" value="1"/>
</dbReference>
<dbReference type="PROSITE" id="PS51217">
    <property type="entry name" value="UVRD_HELICASE_CTER"/>
    <property type="match status" value="1"/>
</dbReference>
<feature type="chain" id="PRO_0000379290" description="Exonuclease/helicase subunit RexA">
    <location>
        <begin position="1"/>
        <end position="1203"/>
    </location>
</feature>
<feature type="domain" description="UvrD-like helicase ATP-binding" evidence="1">
    <location>
        <begin position="4"/>
        <end position="472"/>
    </location>
</feature>
<feature type="domain" description="UvrD-like helicase C-terminal" evidence="1">
    <location>
        <begin position="503"/>
        <end position="785"/>
    </location>
</feature>
<feature type="binding site" evidence="1">
    <location>
        <begin position="25"/>
        <end position="32"/>
    </location>
    <ligand>
        <name>ATP</name>
        <dbReference type="ChEBI" id="CHEBI:30616"/>
    </ligand>
</feature>
<feature type="mutagenesis site" description="Increase in UV sensitivity and loss of nuclease activity; complete loss of RexAB activities." evidence="2">
    <location>
        <begin position="1144"/>
        <end position="1146"/>
    </location>
</feature>
<feature type="sequence conflict" description="In Ref. 1; AAC12966." evidence="6" ref="1">
    <location>
        <begin position="238"/>
        <end position="267"/>
    </location>
</feature>
<protein>
    <recommendedName>
        <fullName evidence="4">Exonuclease/helicase subunit RexA</fullName>
        <ecNumber evidence="1 2">3.1.-.-</ecNumber>
        <ecNumber evidence="1">5.6.2.4</ecNumber>
    </recommendedName>
    <alternativeName>
        <fullName evidence="1">ATP-dependent helicase/deoxyribonuclease subunit A</fullName>
    </alternativeName>
    <alternativeName>
        <fullName evidence="1">DNA 3'-5' helicase AddA</fullName>
    </alternativeName>
</protein>
<comment type="function">
    <text evidence="2 3">The heterodimer acts both as an ATP-dependent DNA helicase and an ATP-dependent, dual-direction single-stranded exonuclease. Recognizes the L.lactis chi site (5'-GCGCGTG-3'), which stimulates homologous recombination. The RexA (AddA) nuclease domain is required for chi fragment generation; this subunit has 3'-&gt;5' exonuclease activity and probably also performs the helicase function.</text>
</comment>
<comment type="catalytic activity">
    <reaction evidence="1">
        <text>Couples ATP hydrolysis with the unwinding of duplex DNA by translocating in the 3'-5' direction.</text>
        <dbReference type="EC" id="5.6.2.4"/>
    </reaction>
</comment>
<comment type="catalytic activity">
    <reaction evidence="1">
        <text>ATP + H2O = ADP + phosphate + H(+)</text>
        <dbReference type="Rhea" id="RHEA:13065"/>
        <dbReference type="ChEBI" id="CHEBI:15377"/>
        <dbReference type="ChEBI" id="CHEBI:15378"/>
        <dbReference type="ChEBI" id="CHEBI:30616"/>
        <dbReference type="ChEBI" id="CHEBI:43474"/>
        <dbReference type="ChEBI" id="CHEBI:456216"/>
        <dbReference type="EC" id="5.6.2.4"/>
    </reaction>
</comment>
<comment type="cofactor">
    <cofactor evidence="1">
        <name>Mg(2+)</name>
        <dbReference type="ChEBI" id="CHEBI:18420"/>
    </cofactor>
</comment>
<comment type="subunit">
    <text evidence="7">Heterodimer of RexA (AddA) and RexB.</text>
</comment>
<comment type="disruption phenotype">
    <text evidence="3">Cells lacking this gene have an increased sensitivity to UV and about 300-fold reduced chromosomal conjugational transfer.</text>
</comment>
<comment type="miscellaneous">
    <text>This enzyme is a functional homolog of the E.coli RecBCD enzyme; unlike the RecBCD enzyme it degrades both duplex strands symmetrically.</text>
</comment>
<comment type="similarity">
    <text evidence="1">Belongs to the helicase family. AddA subfamily.</text>
</comment>
<keyword id="KW-0067">ATP-binding</keyword>
<keyword id="KW-0227">DNA damage</keyword>
<keyword id="KW-0234">DNA repair</keyword>
<keyword id="KW-0238">DNA-binding</keyword>
<keyword id="KW-0269">Exonuclease</keyword>
<keyword id="KW-0347">Helicase</keyword>
<keyword id="KW-0378">Hydrolase</keyword>
<keyword id="KW-0413">Isomerase</keyword>
<keyword id="KW-0540">Nuclease</keyword>
<keyword id="KW-0547">Nucleotide-binding</keyword>
<gene>
    <name evidence="5" type="primary">rexA</name>
    <name evidence="1" type="synonym">addA</name>
    <name type="ordered locus">llmg_0004</name>
</gene>
<proteinExistence type="evidence at protein level"/>
<name>ADDA_LACLM</name>
<sequence length="1203" mass="138945">MSEVKLTPEQNEAIHSSGKNILVSASAGSGKTFVMAQRIVEKVKQGIEIDRLFISTFTKKAASELRMRLERDLKKARQESSDDEEAHRLTLALQNLSNADIGTMDSFTQKLTKANFNRVNIDPNFRILADQTESDLIRQEVFEQLVESYLSADESLNISKDKFEKLIKNFSKDRNILGFQKVVYTIYRFASATENPISWLENQFLKGFETYKSLTDLSEDFTVNVKENLLTFFELLENSLTNGVIAKKGAGRDKANLILDNKNELLEAISKKDFVTCTALFLSIDTDIRVGSSKDEALSALKKDFSAQKQDLVGSKSKPGELRKFVDKIKHGQLIEKYQNQAFEIASDLQKFIIDFYKTYLERKKNENAFEYSDIAHFAIEILEENPDIRENLREHYDEIMIDEYQDTSHTQERMLELLSNGHNLFMVGDIKQSIYGFRLADPGLFLEKYKSYDQAENPNQLIRLKENFRSRGEVLNFTNDIFKHLMDEKLGEMTYGKEEALVQGNISDYPVEAEKDFYPELLLYKENTSEEEIEDSEVKISDGEIKGAAQEIKKLIEYGVEPKDIAILVRSKSNNNKIEDILLSYDIPVVLDEGRVDFLKSMEVLIMLDVLRAIDNPLYDLSLVAMLRSPLFGFNEDELTRISVQGSRDLRFWDKILLSLKKEGKNPELINLSLEQKLKAFNQKFTEWRKLVNKIPIHRLLWKIYTETYYFDYVGALKNGEMRQANLQALSVRAESYESSGYKGLFKFVRLINKFMEQNNDLASVNIKLPQNAVRVMTFHKSKGLEFDYVFLMNLQSRFNDRDLKEDVILSREHGLGMKYIADLKAEPDVITDFPYALVKMETFPYMVNKDLKQRAALSEEMRVLYVAFTRAKKKLYLVGKIKDTDKKAGLELYDAATLEGKILSDKFRNSSRGFQHWILALQNATKLPMKLNVYTKDELETEKLEFTSQPDFKKLVEESEKFDNIMSFSDEIKEAQKIMNYQYPHQAATELSSIQTPSQVKKRSYEKQLQVGEVQPVSEFVRVKNLDFSDFGPKKITAAEMGSATHSFMQYADFSQADLFSFQATLDEMGFDEKIKNQIDITKILTLFDTEFGQFLSENVDKTVKEAPFSMLRTDEFAKEQYIVRGICDGFVKLADKIILFDYKTDRFTNVSAISEIKERYKDQMNLYSEALQKAYHVNQIDKYLILLGGPRKVFVEKIDD</sequence>
<accession>A2RH77</accession>
<accession>O54378</accession>